<dbReference type="EC" id="2.3.2.6" evidence="1"/>
<dbReference type="EMBL" id="CU928162">
    <property type="protein sequence ID" value="CAR07062.1"/>
    <property type="molecule type" value="Genomic_DNA"/>
</dbReference>
<dbReference type="RefSeq" id="WP_001241691.1">
    <property type="nucleotide sequence ID" value="NC_011745.1"/>
</dbReference>
<dbReference type="SMR" id="B7MRU8"/>
<dbReference type="KEGG" id="ecq:ECED1_0859"/>
<dbReference type="HOGENOM" id="CLU_075045_0_0_6"/>
<dbReference type="Proteomes" id="UP000000748">
    <property type="component" value="Chromosome"/>
</dbReference>
<dbReference type="GO" id="GO:0005737">
    <property type="term" value="C:cytoplasm"/>
    <property type="evidence" value="ECO:0007669"/>
    <property type="project" value="UniProtKB-SubCell"/>
</dbReference>
<dbReference type="GO" id="GO:0008914">
    <property type="term" value="F:leucyl-tRNA--protein transferase activity"/>
    <property type="evidence" value="ECO:0007669"/>
    <property type="project" value="UniProtKB-UniRule"/>
</dbReference>
<dbReference type="GO" id="GO:0030163">
    <property type="term" value="P:protein catabolic process"/>
    <property type="evidence" value="ECO:0007669"/>
    <property type="project" value="UniProtKB-UniRule"/>
</dbReference>
<dbReference type="FunFam" id="3.30.70.3550:FF:000001">
    <property type="entry name" value="Leucyl/phenylalanyl-tRNA--protein transferase"/>
    <property type="match status" value="1"/>
</dbReference>
<dbReference type="FunFam" id="3.40.630.70:FF:000001">
    <property type="entry name" value="Leucyl/phenylalanyl-tRNA--protein transferase"/>
    <property type="match status" value="1"/>
</dbReference>
<dbReference type="Gene3D" id="3.40.630.70">
    <property type="entry name" value="Leucyl/phenylalanyl-tRNA-protein transferase, C-terminal domain"/>
    <property type="match status" value="1"/>
</dbReference>
<dbReference type="Gene3D" id="3.30.70.3550">
    <property type="entry name" value="Leucyl/phenylalanyl-tRNA-protein transferase, N-terminal domain"/>
    <property type="match status" value="1"/>
</dbReference>
<dbReference type="HAMAP" id="MF_00688">
    <property type="entry name" value="Leu_Phe_trans"/>
    <property type="match status" value="1"/>
</dbReference>
<dbReference type="InterPro" id="IPR016181">
    <property type="entry name" value="Acyl_CoA_acyltransferase"/>
</dbReference>
<dbReference type="InterPro" id="IPR004616">
    <property type="entry name" value="Leu/Phe-tRNA_Trfase"/>
</dbReference>
<dbReference type="InterPro" id="IPR042203">
    <property type="entry name" value="Leu/Phe-tRNA_Trfase_C"/>
</dbReference>
<dbReference type="InterPro" id="IPR042221">
    <property type="entry name" value="Leu/Phe-tRNA_Trfase_N"/>
</dbReference>
<dbReference type="NCBIfam" id="TIGR00667">
    <property type="entry name" value="aat"/>
    <property type="match status" value="1"/>
</dbReference>
<dbReference type="PANTHER" id="PTHR30098">
    <property type="entry name" value="LEUCYL/PHENYLALANYL-TRNA--PROTEIN TRANSFERASE"/>
    <property type="match status" value="1"/>
</dbReference>
<dbReference type="PANTHER" id="PTHR30098:SF2">
    <property type="entry name" value="LEUCYL_PHENYLALANYL-TRNA--PROTEIN TRANSFERASE"/>
    <property type="match status" value="1"/>
</dbReference>
<dbReference type="Pfam" id="PF03588">
    <property type="entry name" value="Leu_Phe_trans"/>
    <property type="match status" value="1"/>
</dbReference>
<dbReference type="SUPFAM" id="SSF55729">
    <property type="entry name" value="Acyl-CoA N-acyltransferases (Nat)"/>
    <property type="match status" value="1"/>
</dbReference>
<sequence length="234" mass="26703">MRLVQLSRHSIAFPSPEGALREPNGLLALGGDLSPARLLMAYQRGIFPWFSPGDPILWWSPDPRAVLWPESLHISRSMKRFHKRSPYRVTMNYAFGQVIEGCASDREEGTWITRGVVKAYHRLHELGHAHSIEVWREDELVGGMYGVAQGTLFCGESMFSRMENASKTALLVFCDEFIRHGGKLIDCQVLNDHTASLGACEIPRRDYLNYLNQMRLGRLPNNFWVPRCLFSPQE</sequence>
<comment type="function">
    <text evidence="1">Functions in the N-end rule pathway of protein degradation where it conjugates Leu, Phe and, less efficiently, Met from aminoacyl-tRNAs to the N-termini of proteins containing an N-terminal arginine or lysine.</text>
</comment>
<comment type="catalytic activity">
    <reaction evidence="1">
        <text>N-terminal L-lysyl-[protein] + L-leucyl-tRNA(Leu) = N-terminal L-leucyl-L-lysyl-[protein] + tRNA(Leu) + H(+)</text>
        <dbReference type="Rhea" id="RHEA:12340"/>
        <dbReference type="Rhea" id="RHEA-COMP:9613"/>
        <dbReference type="Rhea" id="RHEA-COMP:9622"/>
        <dbReference type="Rhea" id="RHEA-COMP:12670"/>
        <dbReference type="Rhea" id="RHEA-COMP:12671"/>
        <dbReference type="ChEBI" id="CHEBI:15378"/>
        <dbReference type="ChEBI" id="CHEBI:65249"/>
        <dbReference type="ChEBI" id="CHEBI:78442"/>
        <dbReference type="ChEBI" id="CHEBI:78494"/>
        <dbReference type="ChEBI" id="CHEBI:133043"/>
        <dbReference type="EC" id="2.3.2.6"/>
    </reaction>
</comment>
<comment type="catalytic activity">
    <reaction evidence="1">
        <text>N-terminal L-arginyl-[protein] + L-leucyl-tRNA(Leu) = N-terminal L-leucyl-L-arginyl-[protein] + tRNA(Leu) + H(+)</text>
        <dbReference type="Rhea" id="RHEA:50416"/>
        <dbReference type="Rhea" id="RHEA-COMP:9613"/>
        <dbReference type="Rhea" id="RHEA-COMP:9622"/>
        <dbReference type="Rhea" id="RHEA-COMP:12672"/>
        <dbReference type="Rhea" id="RHEA-COMP:12673"/>
        <dbReference type="ChEBI" id="CHEBI:15378"/>
        <dbReference type="ChEBI" id="CHEBI:64719"/>
        <dbReference type="ChEBI" id="CHEBI:78442"/>
        <dbReference type="ChEBI" id="CHEBI:78494"/>
        <dbReference type="ChEBI" id="CHEBI:133044"/>
        <dbReference type="EC" id="2.3.2.6"/>
    </reaction>
</comment>
<comment type="catalytic activity">
    <reaction evidence="1">
        <text>L-phenylalanyl-tRNA(Phe) + an N-terminal L-alpha-aminoacyl-[protein] = an N-terminal L-phenylalanyl-L-alpha-aminoacyl-[protein] + tRNA(Phe)</text>
        <dbReference type="Rhea" id="RHEA:43632"/>
        <dbReference type="Rhea" id="RHEA-COMP:9668"/>
        <dbReference type="Rhea" id="RHEA-COMP:9699"/>
        <dbReference type="Rhea" id="RHEA-COMP:10636"/>
        <dbReference type="Rhea" id="RHEA-COMP:10637"/>
        <dbReference type="ChEBI" id="CHEBI:78442"/>
        <dbReference type="ChEBI" id="CHEBI:78531"/>
        <dbReference type="ChEBI" id="CHEBI:78597"/>
        <dbReference type="ChEBI" id="CHEBI:83561"/>
        <dbReference type="EC" id="2.3.2.6"/>
    </reaction>
</comment>
<comment type="subcellular location">
    <subcellularLocation>
        <location evidence="1">Cytoplasm</location>
    </subcellularLocation>
</comment>
<comment type="similarity">
    <text evidence="1">Belongs to the L/F-transferase family.</text>
</comment>
<gene>
    <name evidence="1" type="primary">aat</name>
    <name type="ordered locus">ECED1_0859</name>
</gene>
<organism>
    <name type="scientific">Escherichia coli O81 (strain ED1a)</name>
    <dbReference type="NCBI Taxonomy" id="585397"/>
    <lineage>
        <taxon>Bacteria</taxon>
        <taxon>Pseudomonadati</taxon>
        <taxon>Pseudomonadota</taxon>
        <taxon>Gammaproteobacteria</taxon>
        <taxon>Enterobacterales</taxon>
        <taxon>Enterobacteriaceae</taxon>
        <taxon>Escherichia</taxon>
    </lineage>
</organism>
<evidence type="ECO:0000255" key="1">
    <source>
        <dbReference type="HAMAP-Rule" id="MF_00688"/>
    </source>
</evidence>
<proteinExistence type="inferred from homology"/>
<keyword id="KW-0012">Acyltransferase</keyword>
<keyword id="KW-0963">Cytoplasm</keyword>
<keyword id="KW-0808">Transferase</keyword>
<name>LFTR_ECO81</name>
<reference key="1">
    <citation type="journal article" date="2009" name="PLoS Genet.">
        <title>Organised genome dynamics in the Escherichia coli species results in highly diverse adaptive paths.</title>
        <authorList>
            <person name="Touchon M."/>
            <person name="Hoede C."/>
            <person name="Tenaillon O."/>
            <person name="Barbe V."/>
            <person name="Baeriswyl S."/>
            <person name="Bidet P."/>
            <person name="Bingen E."/>
            <person name="Bonacorsi S."/>
            <person name="Bouchier C."/>
            <person name="Bouvet O."/>
            <person name="Calteau A."/>
            <person name="Chiapello H."/>
            <person name="Clermont O."/>
            <person name="Cruveiller S."/>
            <person name="Danchin A."/>
            <person name="Diard M."/>
            <person name="Dossat C."/>
            <person name="Karoui M.E."/>
            <person name="Frapy E."/>
            <person name="Garry L."/>
            <person name="Ghigo J.M."/>
            <person name="Gilles A.M."/>
            <person name="Johnson J."/>
            <person name="Le Bouguenec C."/>
            <person name="Lescat M."/>
            <person name="Mangenot S."/>
            <person name="Martinez-Jehanne V."/>
            <person name="Matic I."/>
            <person name="Nassif X."/>
            <person name="Oztas S."/>
            <person name="Petit M.A."/>
            <person name="Pichon C."/>
            <person name="Rouy Z."/>
            <person name="Ruf C.S."/>
            <person name="Schneider D."/>
            <person name="Tourret J."/>
            <person name="Vacherie B."/>
            <person name="Vallenet D."/>
            <person name="Medigue C."/>
            <person name="Rocha E.P.C."/>
            <person name="Denamur E."/>
        </authorList>
    </citation>
    <scope>NUCLEOTIDE SEQUENCE [LARGE SCALE GENOMIC DNA]</scope>
    <source>
        <strain>ED1a</strain>
    </source>
</reference>
<accession>B7MRU8</accession>
<protein>
    <recommendedName>
        <fullName evidence="1">Leucyl/phenylalanyl-tRNA--protein transferase</fullName>
        <ecNumber evidence="1">2.3.2.6</ecNumber>
    </recommendedName>
    <alternativeName>
        <fullName evidence="1">L/F-transferase</fullName>
    </alternativeName>
    <alternativeName>
        <fullName evidence="1">Leucyltransferase</fullName>
    </alternativeName>
    <alternativeName>
        <fullName evidence="1">Phenyalanyltransferase</fullName>
    </alternativeName>
</protein>
<feature type="chain" id="PRO_1000147791" description="Leucyl/phenylalanyl-tRNA--protein transferase">
    <location>
        <begin position="1"/>
        <end position="234"/>
    </location>
</feature>